<proteinExistence type="evidence at protein level"/>
<organism>
    <name type="scientific">Methanococcus maripaludis (strain DSM 14266 / JCM 13030 / NBRC 101832 / S2 / LL)</name>
    <dbReference type="NCBI Taxonomy" id="267377"/>
    <lineage>
        <taxon>Archaea</taxon>
        <taxon>Methanobacteriati</taxon>
        <taxon>Methanobacteriota</taxon>
        <taxon>Methanomada group</taxon>
        <taxon>Methanococci</taxon>
        <taxon>Methanococcales</taxon>
        <taxon>Methanococcaceae</taxon>
        <taxon>Methanococcus</taxon>
    </lineage>
</organism>
<sequence>MTEFKVVHTICPYCGTGCGIDLVVKDGKVVDSHPFKRHPVNEGKVCIKGNYCYEFVHSEDRLTKPLIKKNGEFIEATWDEALDLIAGKLKQYSPDEVAFFSCARGTNEESYALQKFARTVLKTNNVDHCARIUHAPTVVGLGECFGSGAMTNSITDLAQADVLLIYGSNTFEAHPLIARSIVKAKENGTKIIAIDPRTTHTAKMADLHLKLIPGSNIDLINTITNIIIQEGMADEEFIKNRTEGYDELKDVVSKYTLEKTAELSGIPAETILEAARMYGSAENASIMYCLGVTEYTFGVDNVKSCCNLAMVTGNLGRPGTGVNPLRGQNNVQGACDMGALPNVFPGYQKVGEAYERLENLWETADLNREIGLTSPEVLHKAGEQVKFLHIVGEDPMVADADINHVEKALKSLDFFVVQDIFLTETAKLADVVLPAACWAEKDGTFTNSERRVQRIRKAVDAPGDALPDWLIVRKLAEKMGAGEKLNFESASEIFDEMAKVIPQYAGMSFERLGIDGLQWPCKTPEDPGTPILHKEKFLRPNGLGKFTPVEHKDADELIDEEYPLILTTGRIIFHYNSGTMTRRCDSITNEIDENFIEINTEDAKELGIKPGEKVRVSSRRGTVNADARVTENVIKGVVYMSFHFLEEATNKLTNSAYDPVSKTAELKICAVKVEKI</sequence>
<name>FDHA2_METMP</name>
<comment type="function">
    <text evidence="4">Catalyzes the oxidation of formate to carbon dioxide, with coenzyme F420 as the electron acceptor (PubMed:18791018). In vitro can also use methyl viologen as electron acceptor (PubMed:18791018).</text>
</comment>
<comment type="catalytic activity">
    <reaction evidence="8">
        <text>oxidized coenzyme F420-(gamma-L-Glu)(n) + formate + 2 H(+) = reduced coenzyme F420-(gamma-L-Glu)(n) + CO2</text>
        <dbReference type="Rhea" id="RHEA:42764"/>
        <dbReference type="Rhea" id="RHEA-COMP:12939"/>
        <dbReference type="Rhea" id="RHEA-COMP:14378"/>
        <dbReference type="ChEBI" id="CHEBI:15378"/>
        <dbReference type="ChEBI" id="CHEBI:15740"/>
        <dbReference type="ChEBI" id="CHEBI:16526"/>
        <dbReference type="ChEBI" id="CHEBI:133980"/>
        <dbReference type="ChEBI" id="CHEBI:139511"/>
        <dbReference type="EC" id="1.17.98.3"/>
    </reaction>
</comment>
<comment type="cofactor">
    <cofactor evidence="2">
        <name>[4Fe-4S] cluster</name>
        <dbReference type="ChEBI" id="CHEBI:49883"/>
    </cofactor>
    <text evidence="2">Binds 1 [4Fe-4S] cluster.</text>
</comment>
<comment type="cofactor">
    <cofactor evidence="1">
        <name>Mo-bis(molybdopterin guanine dinucleotide)</name>
        <dbReference type="ChEBI" id="CHEBI:60539"/>
    </cofactor>
    <text evidence="1">Binds 1 molybdenum-bis(molybdopterin guanine dinucleotide) (Mo-bis-MGD) cofactor per subunit.</text>
</comment>
<comment type="cofactor">
    <cofactor evidence="1">
        <name>Zn(2+)</name>
        <dbReference type="ChEBI" id="CHEBI:29105"/>
    </cofactor>
</comment>
<comment type="subunit">
    <text evidence="1">Dimer of an alpha (FdhA2) and a beta (FdhB2) subunit.</text>
</comment>
<comment type="induction">
    <text evidence="5">Expression is induced by formate limitation.</text>
</comment>
<comment type="disruption phenotype">
    <text evidence="4 5">Deletion of the gene does not affect growth on formate and H(2) production is only slightly reduced (PubMed:18791018, PubMed:23335420). The fdhA1-fdhA2 double mutant is unable to utilize formate for either growth or H(2) production (PubMed:18791018).</text>
</comment>
<comment type="miscellaneous">
    <text evidence="4">The genome of M.maripaludis harbors two sets of genes encoding the F420-dependent formate dehydrogenase (Fdh), fdhA1-fdhB1 (Fdh1 isozyme) and fdhA2-fdhB2 (Fdh2 isozyme) (PubMed:18791018). The Fdh1 isozyme is the primary Fdh and the Fdh2 isozyme may not play a major role (PubMed:18791018).</text>
</comment>
<comment type="similarity">
    <text evidence="7">Belongs to the prokaryotic molybdopterin-containing oxidoreductase family.</text>
</comment>
<accession>F1SVN3</accession>
<gene>
    <name evidence="6" type="primary">fdhA2</name>
    <name evidence="9" type="ordered locus">MMP0138</name>
</gene>
<reference key="1">
    <citation type="journal article" date="2004" name="J. Bacteriol.">
        <title>Complete genome sequence of the genetically tractable hydrogenotrophic methanogen Methanococcus maripaludis.</title>
        <authorList>
            <person name="Hendrickson E.L."/>
            <person name="Kaul R."/>
            <person name="Zhou Y."/>
            <person name="Bovee D."/>
            <person name="Chapman P."/>
            <person name="Chung J."/>
            <person name="Conway de Macario E."/>
            <person name="Dodsworth J.A."/>
            <person name="Gillett W."/>
            <person name="Graham D.E."/>
            <person name="Hackett M."/>
            <person name="Haydock A.K."/>
            <person name="Kang A."/>
            <person name="Land M.L."/>
            <person name="Levy R."/>
            <person name="Lie T.J."/>
            <person name="Major T.A."/>
            <person name="Moore B.C."/>
            <person name="Porat I."/>
            <person name="Palmeiri A."/>
            <person name="Rouse G."/>
            <person name="Saenphimmachak C."/>
            <person name="Soell D."/>
            <person name="Van Dien S."/>
            <person name="Wang T."/>
            <person name="Whitman W.B."/>
            <person name="Xia Q."/>
            <person name="Zhang Y."/>
            <person name="Larimer F.W."/>
            <person name="Olson M.V."/>
            <person name="Leigh J.A."/>
        </authorList>
    </citation>
    <scope>NUCLEOTIDE SEQUENCE [LARGE SCALE GENOMIC DNA]</scope>
    <source>
        <strain>DSM 14266 / JCM 13030 / NBRC 101832 / S2 / LL</strain>
    </source>
</reference>
<reference key="2">
    <citation type="journal article" date="2008" name="Appl. Environ. Microbiol.">
        <title>Formate-dependent H2 production by the mesophilic methanogen Methanococcus maripaludis.</title>
        <authorList>
            <person name="Lupa B."/>
            <person name="Hendrickson E.L."/>
            <person name="Leigh J.A."/>
            <person name="Whitman W.B."/>
        </authorList>
    </citation>
    <scope>FUNCTION AS A FORMATE DEHYDROGENASE</scope>
    <scope>DISRUPTION PHENOTYPE</scope>
    <source>
        <strain>DSM 14266 / JCM 13030 / NBRC 101832 / S2 / LL</strain>
    </source>
</reference>
<reference key="3">
    <citation type="journal article" date="2013" name="J. Bacteriol.">
        <title>Effects of H2 and formate on growth yield and regulation of methanogenesis in Methanococcus maripaludis.</title>
        <authorList>
            <person name="Costa K.C."/>
            <person name="Yoon S.H."/>
            <person name="Pan M."/>
            <person name="Burn J.A."/>
            <person name="Baliga N.S."/>
            <person name="Leigh J.A."/>
        </authorList>
    </citation>
    <scope>INDUCTION</scope>
    <scope>DISRUPTION PHENOTYPE</scope>
</reference>
<feature type="chain" id="PRO_0000461128" description="F420-dependent formate dehydrogenase 2 subunit alpha">
    <location>
        <begin position="1"/>
        <end position="676"/>
    </location>
</feature>
<feature type="domain" description="4Fe-4S Mo/W bis-MGD-type" evidence="3">
    <location>
        <begin position="4"/>
        <end position="60"/>
    </location>
</feature>
<feature type="binding site" evidence="3">
    <location>
        <position position="11"/>
    </location>
    <ligand>
        <name>[4Fe-4S] cluster</name>
        <dbReference type="ChEBI" id="CHEBI:49883"/>
    </ligand>
</feature>
<feature type="binding site" evidence="3">
    <location>
        <position position="14"/>
    </location>
    <ligand>
        <name>[4Fe-4S] cluster</name>
        <dbReference type="ChEBI" id="CHEBI:49883"/>
    </ligand>
</feature>
<feature type="binding site" evidence="3">
    <location>
        <position position="18"/>
    </location>
    <ligand>
        <name>[4Fe-4S] cluster</name>
        <dbReference type="ChEBI" id="CHEBI:49883"/>
    </ligand>
</feature>
<feature type="binding site" evidence="3">
    <location>
        <position position="46"/>
    </location>
    <ligand>
        <name>[4Fe-4S] cluster</name>
        <dbReference type="ChEBI" id="CHEBI:49883"/>
    </ligand>
</feature>
<feature type="non-standard amino acid" description="Selenocysteine" evidence="9">
    <location>
        <position position="133"/>
    </location>
</feature>
<evidence type="ECO:0000250" key="1">
    <source>
        <dbReference type="UniProtKB" id="P06131"/>
    </source>
</evidence>
<evidence type="ECO:0000250" key="2">
    <source>
        <dbReference type="UniProtKB" id="P07658"/>
    </source>
</evidence>
<evidence type="ECO:0000255" key="3">
    <source>
        <dbReference type="PROSITE-ProRule" id="PRU01004"/>
    </source>
</evidence>
<evidence type="ECO:0000269" key="4">
    <source>
    </source>
</evidence>
<evidence type="ECO:0000269" key="5">
    <source>
    </source>
</evidence>
<evidence type="ECO:0000303" key="6">
    <source>
    </source>
</evidence>
<evidence type="ECO:0000305" key="7"/>
<evidence type="ECO:0000305" key="8">
    <source>
    </source>
</evidence>
<evidence type="ECO:0000312" key="9">
    <source>
        <dbReference type="EMBL" id="CAF29694.1"/>
    </source>
</evidence>
<dbReference type="EC" id="1.17.98.3" evidence="8"/>
<dbReference type="EMBL" id="BX950229">
    <property type="protein sequence ID" value="CAF29694.1"/>
    <property type="molecule type" value="Genomic_DNA"/>
</dbReference>
<dbReference type="RefSeq" id="WP_011170082.1">
    <property type="nucleotide sequence ID" value="NC_005791.1"/>
</dbReference>
<dbReference type="STRING" id="267377.MMP0138"/>
<dbReference type="GeneID" id="2762026"/>
<dbReference type="KEGG" id="mmp:MMP0138"/>
<dbReference type="PATRIC" id="fig|267377.15.peg.140"/>
<dbReference type="eggNOG" id="arCOG01491">
    <property type="taxonomic scope" value="Archaea"/>
</dbReference>
<dbReference type="HOGENOM" id="CLU_000422_4_0_2"/>
<dbReference type="OrthoDB" id="23466at2157"/>
<dbReference type="Proteomes" id="UP000000590">
    <property type="component" value="Chromosome"/>
</dbReference>
<dbReference type="GO" id="GO:0016020">
    <property type="term" value="C:membrane"/>
    <property type="evidence" value="ECO:0007669"/>
    <property type="project" value="TreeGrafter"/>
</dbReference>
<dbReference type="GO" id="GO:0051539">
    <property type="term" value="F:4 iron, 4 sulfur cluster binding"/>
    <property type="evidence" value="ECO:0007669"/>
    <property type="project" value="UniProtKB-KW"/>
</dbReference>
<dbReference type="GO" id="GO:0043794">
    <property type="term" value="F:formate dehydrogenase (coenzyme F420) activity"/>
    <property type="evidence" value="ECO:0007669"/>
    <property type="project" value="RHEA"/>
</dbReference>
<dbReference type="GO" id="GO:0008863">
    <property type="term" value="F:formate dehydrogenase (NAD+) activity"/>
    <property type="evidence" value="ECO:0007669"/>
    <property type="project" value="InterPro"/>
</dbReference>
<dbReference type="GO" id="GO:0046872">
    <property type="term" value="F:metal ion binding"/>
    <property type="evidence" value="ECO:0007669"/>
    <property type="project" value="UniProtKB-KW"/>
</dbReference>
<dbReference type="GO" id="GO:0043546">
    <property type="term" value="F:molybdopterin cofactor binding"/>
    <property type="evidence" value="ECO:0007669"/>
    <property type="project" value="InterPro"/>
</dbReference>
<dbReference type="GO" id="GO:0003954">
    <property type="term" value="F:NADH dehydrogenase activity"/>
    <property type="evidence" value="ECO:0007669"/>
    <property type="project" value="TreeGrafter"/>
</dbReference>
<dbReference type="GO" id="GO:0015942">
    <property type="term" value="P:formate metabolic process"/>
    <property type="evidence" value="ECO:0007669"/>
    <property type="project" value="InterPro"/>
</dbReference>
<dbReference type="GO" id="GO:0022904">
    <property type="term" value="P:respiratory electron transport chain"/>
    <property type="evidence" value="ECO:0007669"/>
    <property type="project" value="TreeGrafter"/>
</dbReference>
<dbReference type="CDD" id="cd02790">
    <property type="entry name" value="MopB_CT_Formate-Dh_H"/>
    <property type="match status" value="1"/>
</dbReference>
<dbReference type="CDD" id="cd02753">
    <property type="entry name" value="MopB_Formate-Dh-H"/>
    <property type="match status" value="1"/>
</dbReference>
<dbReference type="FunFam" id="2.20.25.90:FF:000006">
    <property type="entry name" value="Formate dehydrogenase alpha subunit"/>
    <property type="match status" value="1"/>
</dbReference>
<dbReference type="FunFam" id="3.40.228.10:FF:000002">
    <property type="entry name" value="Formate dehydrogenase subunit alpha"/>
    <property type="match status" value="1"/>
</dbReference>
<dbReference type="FunFam" id="2.40.40.20:FF:000005">
    <property type="entry name" value="Periplasmic nitrate reductase"/>
    <property type="match status" value="1"/>
</dbReference>
<dbReference type="Gene3D" id="2.40.40.20">
    <property type="match status" value="1"/>
</dbReference>
<dbReference type="Gene3D" id="3.40.50.740">
    <property type="match status" value="1"/>
</dbReference>
<dbReference type="Gene3D" id="2.20.25.90">
    <property type="entry name" value="ADC-like domains"/>
    <property type="match status" value="1"/>
</dbReference>
<dbReference type="Gene3D" id="3.40.228.10">
    <property type="entry name" value="Dimethylsulfoxide Reductase, domain 2"/>
    <property type="match status" value="1"/>
</dbReference>
<dbReference type="InterPro" id="IPR009010">
    <property type="entry name" value="Asp_de-COase-like_dom_sf"/>
</dbReference>
<dbReference type="InterPro" id="IPR041925">
    <property type="entry name" value="CT_Formate-Dh_H"/>
</dbReference>
<dbReference type="InterPro" id="IPR041924">
    <property type="entry name" value="Formate_Dh-H_N"/>
</dbReference>
<dbReference type="InterPro" id="IPR006478">
    <property type="entry name" value="Formate_DH_asu"/>
</dbReference>
<dbReference type="InterPro" id="IPR006657">
    <property type="entry name" value="MoPterin_dinucl-bd_dom"/>
</dbReference>
<dbReference type="InterPro" id="IPR006656">
    <property type="entry name" value="Mopterin_OxRdtase"/>
</dbReference>
<dbReference type="InterPro" id="IPR006963">
    <property type="entry name" value="Mopterin_OxRdtase_4Fe-4S_dom"/>
</dbReference>
<dbReference type="InterPro" id="IPR006655">
    <property type="entry name" value="Mopterin_OxRdtase_prok_CS"/>
</dbReference>
<dbReference type="InterPro" id="IPR027467">
    <property type="entry name" value="MopterinOxRdtase_cofactor_BS"/>
</dbReference>
<dbReference type="InterPro" id="IPR050123">
    <property type="entry name" value="Prok_molybdopt-oxidoreductase"/>
</dbReference>
<dbReference type="NCBIfam" id="TIGR01591">
    <property type="entry name" value="Fdh-alpha"/>
    <property type="match status" value="1"/>
</dbReference>
<dbReference type="PANTHER" id="PTHR43105:SF14">
    <property type="entry name" value="FORMATE DEHYDROGENASE H"/>
    <property type="match status" value="1"/>
</dbReference>
<dbReference type="PANTHER" id="PTHR43105">
    <property type="entry name" value="RESPIRATORY NITRATE REDUCTASE"/>
    <property type="match status" value="1"/>
</dbReference>
<dbReference type="Pfam" id="PF04879">
    <property type="entry name" value="Molybdop_Fe4S4"/>
    <property type="match status" value="1"/>
</dbReference>
<dbReference type="Pfam" id="PF00384">
    <property type="entry name" value="Molybdopterin"/>
    <property type="match status" value="1"/>
</dbReference>
<dbReference type="Pfam" id="PF01568">
    <property type="entry name" value="Molydop_binding"/>
    <property type="match status" value="1"/>
</dbReference>
<dbReference type="SMART" id="SM00926">
    <property type="entry name" value="Molybdop_Fe4S4"/>
    <property type="match status" value="1"/>
</dbReference>
<dbReference type="SUPFAM" id="SSF50692">
    <property type="entry name" value="ADC-like"/>
    <property type="match status" value="1"/>
</dbReference>
<dbReference type="SUPFAM" id="SSF53706">
    <property type="entry name" value="Formate dehydrogenase/DMSO reductase, domains 1-3"/>
    <property type="match status" value="1"/>
</dbReference>
<dbReference type="PROSITE" id="PS51669">
    <property type="entry name" value="4FE4S_MOW_BIS_MGD"/>
    <property type="match status" value="1"/>
</dbReference>
<dbReference type="PROSITE" id="PS00551">
    <property type="entry name" value="MOLYBDOPTERIN_PROK_1"/>
    <property type="match status" value="1"/>
</dbReference>
<dbReference type="PROSITE" id="PS00490">
    <property type="entry name" value="MOLYBDOPTERIN_PROK_2"/>
    <property type="match status" value="1"/>
</dbReference>
<keyword id="KW-0004">4Fe-4S</keyword>
<keyword id="KW-0408">Iron</keyword>
<keyword id="KW-0411">Iron-sulfur</keyword>
<keyword id="KW-0479">Metal-binding</keyword>
<keyword id="KW-0500">Molybdenum</keyword>
<keyword id="KW-0560">Oxidoreductase</keyword>
<keyword id="KW-1185">Reference proteome</keyword>
<keyword id="KW-0712">Selenocysteine</keyword>
<keyword id="KW-0862">Zinc</keyword>
<protein>
    <recommendedName>
        <fullName evidence="7">F420-dependent formate dehydrogenase 2 subunit alpha</fullName>
        <shortName evidence="7">Fdh2 subunit alpha</shortName>
        <ecNumber evidence="8">1.17.98.3</ecNumber>
    </recommendedName>
</protein>